<dbReference type="EMBL" id="CP001103">
    <property type="protein sequence ID" value="AEA97213.1"/>
    <property type="molecule type" value="Genomic_DNA"/>
</dbReference>
<dbReference type="RefSeq" id="WP_012517567.1">
    <property type="nucleotide sequence ID" value="NC_011138.3"/>
</dbReference>
<dbReference type="SMR" id="B4RVI6"/>
<dbReference type="GeneID" id="56341462"/>
<dbReference type="KEGG" id="amc:MADE_1005335"/>
<dbReference type="HOGENOM" id="CLU_073981_2_1_6"/>
<dbReference type="Proteomes" id="UP000001870">
    <property type="component" value="Chromosome"/>
</dbReference>
<dbReference type="GO" id="GO:0005829">
    <property type="term" value="C:cytosol"/>
    <property type="evidence" value="ECO:0007669"/>
    <property type="project" value="GOC"/>
</dbReference>
<dbReference type="GO" id="GO:0043023">
    <property type="term" value="F:ribosomal large subunit binding"/>
    <property type="evidence" value="ECO:0007669"/>
    <property type="project" value="TreeGrafter"/>
</dbReference>
<dbReference type="GO" id="GO:0002184">
    <property type="term" value="P:cytoplasmic translational termination"/>
    <property type="evidence" value="ECO:0007669"/>
    <property type="project" value="TreeGrafter"/>
</dbReference>
<dbReference type="CDD" id="cd00520">
    <property type="entry name" value="RRF"/>
    <property type="match status" value="1"/>
</dbReference>
<dbReference type="FunFam" id="1.10.132.20:FF:000001">
    <property type="entry name" value="Ribosome-recycling factor"/>
    <property type="match status" value="1"/>
</dbReference>
<dbReference type="FunFam" id="3.30.1360.40:FF:000001">
    <property type="entry name" value="Ribosome-recycling factor"/>
    <property type="match status" value="1"/>
</dbReference>
<dbReference type="Gene3D" id="3.30.1360.40">
    <property type="match status" value="1"/>
</dbReference>
<dbReference type="Gene3D" id="1.10.132.20">
    <property type="entry name" value="Ribosome-recycling factor"/>
    <property type="match status" value="1"/>
</dbReference>
<dbReference type="HAMAP" id="MF_00040">
    <property type="entry name" value="RRF"/>
    <property type="match status" value="1"/>
</dbReference>
<dbReference type="InterPro" id="IPR002661">
    <property type="entry name" value="Ribosome_recyc_fac"/>
</dbReference>
<dbReference type="InterPro" id="IPR023584">
    <property type="entry name" value="Ribosome_recyc_fac_dom"/>
</dbReference>
<dbReference type="InterPro" id="IPR036191">
    <property type="entry name" value="RRF_sf"/>
</dbReference>
<dbReference type="NCBIfam" id="TIGR00496">
    <property type="entry name" value="frr"/>
    <property type="match status" value="1"/>
</dbReference>
<dbReference type="PANTHER" id="PTHR20982:SF3">
    <property type="entry name" value="MITOCHONDRIAL RIBOSOME RECYCLING FACTOR PSEUDO 1"/>
    <property type="match status" value="1"/>
</dbReference>
<dbReference type="PANTHER" id="PTHR20982">
    <property type="entry name" value="RIBOSOME RECYCLING FACTOR"/>
    <property type="match status" value="1"/>
</dbReference>
<dbReference type="Pfam" id="PF01765">
    <property type="entry name" value="RRF"/>
    <property type="match status" value="1"/>
</dbReference>
<dbReference type="SUPFAM" id="SSF55194">
    <property type="entry name" value="Ribosome recycling factor, RRF"/>
    <property type="match status" value="1"/>
</dbReference>
<gene>
    <name evidence="1" type="primary">frr</name>
    <name type="ordered locus">MADE_1005335</name>
</gene>
<evidence type="ECO:0000255" key="1">
    <source>
        <dbReference type="HAMAP-Rule" id="MF_00040"/>
    </source>
</evidence>
<comment type="function">
    <text evidence="1">Responsible for the release of ribosomes from messenger RNA at the termination of protein biosynthesis. May increase the efficiency of translation by recycling ribosomes from one round of translation to another.</text>
</comment>
<comment type="subcellular location">
    <subcellularLocation>
        <location evidence="1">Cytoplasm</location>
    </subcellularLocation>
</comment>
<comment type="similarity">
    <text evidence="1">Belongs to the RRF family.</text>
</comment>
<keyword id="KW-0963">Cytoplasm</keyword>
<keyword id="KW-0648">Protein biosynthesis</keyword>
<accession>B4RVI6</accession>
<accession>F2G279</accession>
<proteinExistence type="inferred from homology"/>
<sequence length="185" mass="20614">MIDEIELDAQERMEKSLVALKGQFSKIRTGRAHPSLLDGIMVPYYGVDTPLKQVANVVAEDSRTLALTVFDKSAIQAVEKAIMQSDLGLNPMSAGGSIRIPLPPLTEERRKDLIRVVRNEAEGGRVAIRNIRRDANGDVKDLLKEKEISEDESRAAEENIQSITNEFIKKVDSLLADKEKELMEV</sequence>
<feature type="chain" id="PRO_1000090704" description="Ribosome-recycling factor">
    <location>
        <begin position="1"/>
        <end position="185"/>
    </location>
</feature>
<protein>
    <recommendedName>
        <fullName evidence="1">Ribosome-recycling factor</fullName>
        <shortName evidence="1">RRF</shortName>
    </recommendedName>
    <alternativeName>
        <fullName evidence="1">Ribosome-releasing factor</fullName>
    </alternativeName>
</protein>
<name>RRF_ALTMD</name>
<organism>
    <name type="scientific">Alteromonas mediterranea (strain DSM 17117 / CIP 110805 / LMG 28347 / Deep ecotype)</name>
    <dbReference type="NCBI Taxonomy" id="1774373"/>
    <lineage>
        <taxon>Bacteria</taxon>
        <taxon>Pseudomonadati</taxon>
        <taxon>Pseudomonadota</taxon>
        <taxon>Gammaproteobacteria</taxon>
        <taxon>Alteromonadales</taxon>
        <taxon>Alteromonadaceae</taxon>
        <taxon>Alteromonas/Salinimonas group</taxon>
        <taxon>Alteromonas</taxon>
    </lineage>
</organism>
<reference key="1">
    <citation type="journal article" date="2008" name="ISME J.">
        <title>Comparative genomics of two ecotypes of the marine planktonic copiotroph Alteromonas macleodii suggests alternative lifestyles associated with different kinds of particulate organic matter.</title>
        <authorList>
            <person name="Ivars-Martinez E."/>
            <person name="Martin-Cuadrado A.-B."/>
            <person name="D'Auria G."/>
            <person name="Mira A."/>
            <person name="Ferriera S."/>
            <person name="Johnson J."/>
            <person name="Friedman R."/>
            <person name="Rodriguez-Valera F."/>
        </authorList>
    </citation>
    <scope>NUCLEOTIDE SEQUENCE [LARGE SCALE GENOMIC DNA]</scope>
    <source>
        <strain>DSM 17117 / CIP 110805 / LMG 28347 / Deep ecotype</strain>
    </source>
</reference>